<name>DCUP_SALAR</name>
<accession>A9MHD2</accession>
<evidence type="ECO:0000255" key="1">
    <source>
        <dbReference type="HAMAP-Rule" id="MF_00218"/>
    </source>
</evidence>
<organism>
    <name type="scientific">Salmonella arizonae (strain ATCC BAA-731 / CDC346-86 / RSK2980)</name>
    <dbReference type="NCBI Taxonomy" id="41514"/>
    <lineage>
        <taxon>Bacteria</taxon>
        <taxon>Pseudomonadati</taxon>
        <taxon>Pseudomonadota</taxon>
        <taxon>Gammaproteobacteria</taxon>
        <taxon>Enterobacterales</taxon>
        <taxon>Enterobacteriaceae</taxon>
        <taxon>Salmonella</taxon>
    </lineage>
</organism>
<proteinExistence type="inferred from homology"/>
<keyword id="KW-0963">Cytoplasm</keyword>
<keyword id="KW-0210">Decarboxylase</keyword>
<keyword id="KW-0456">Lyase</keyword>
<keyword id="KW-0627">Porphyrin biosynthesis</keyword>
<keyword id="KW-1185">Reference proteome</keyword>
<sequence length="354" mass="39287">MTELKNDRYLRALLRQPVDVTPVWMMRQAGRYLPEYKATRAQAGDFMSLCKNAELACEVTLQPLRRYPLDAAILFSDILTVPDAMELGLYFEAGEGPRFTAPVTCKADVDKLPIPDPEDELGYVMNAVRTIRRELKGEVPLIGFSGSPWTLATYMVEGGSSKAFTVIKKMMYADPQALHLLLDKLAKSVTLYLNAQIKAGAQSVMIFDTWGGVLTGRDYQHFSLYYMHKIVDGLLRENDGRRVPVTLFTKGGGQWLEAMAETGCDALGLDWTTDIADARRRVGHKVALQGNMDPSMLYAPPARIEDEVATILSGFGQGEGHVFNLGHGIHQDVPPEHAGVFVEAVHRLSAQYHN</sequence>
<dbReference type="EC" id="4.1.1.37" evidence="1"/>
<dbReference type="EMBL" id="CP000880">
    <property type="protein sequence ID" value="ABX23315.1"/>
    <property type="molecule type" value="Genomic_DNA"/>
</dbReference>
<dbReference type="SMR" id="A9MHD2"/>
<dbReference type="STRING" id="41514.SARI_03490"/>
<dbReference type="KEGG" id="ses:SARI_03490"/>
<dbReference type="HOGENOM" id="CLU_040933_0_0_6"/>
<dbReference type="UniPathway" id="UPA00251">
    <property type="reaction ID" value="UER00321"/>
</dbReference>
<dbReference type="Proteomes" id="UP000002084">
    <property type="component" value="Chromosome"/>
</dbReference>
<dbReference type="GO" id="GO:0005829">
    <property type="term" value="C:cytosol"/>
    <property type="evidence" value="ECO:0007669"/>
    <property type="project" value="TreeGrafter"/>
</dbReference>
<dbReference type="GO" id="GO:0004853">
    <property type="term" value="F:uroporphyrinogen decarboxylase activity"/>
    <property type="evidence" value="ECO:0007669"/>
    <property type="project" value="UniProtKB-UniRule"/>
</dbReference>
<dbReference type="GO" id="GO:0019353">
    <property type="term" value="P:protoporphyrinogen IX biosynthetic process from glutamate"/>
    <property type="evidence" value="ECO:0007669"/>
    <property type="project" value="TreeGrafter"/>
</dbReference>
<dbReference type="CDD" id="cd00717">
    <property type="entry name" value="URO-D"/>
    <property type="match status" value="1"/>
</dbReference>
<dbReference type="FunFam" id="3.20.20.210:FF:000001">
    <property type="entry name" value="Uroporphyrinogen decarboxylase"/>
    <property type="match status" value="1"/>
</dbReference>
<dbReference type="Gene3D" id="3.20.20.210">
    <property type="match status" value="1"/>
</dbReference>
<dbReference type="HAMAP" id="MF_00218">
    <property type="entry name" value="URO_D"/>
    <property type="match status" value="1"/>
</dbReference>
<dbReference type="InterPro" id="IPR038071">
    <property type="entry name" value="UROD/MetE-like_sf"/>
</dbReference>
<dbReference type="InterPro" id="IPR006361">
    <property type="entry name" value="Uroporphyrinogen_deCO2ase_HemE"/>
</dbReference>
<dbReference type="InterPro" id="IPR000257">
    <property type="entry name" value="Uroporphyrinogen_deCOase"/>
</dbReference>
<dbReference type="NCBIfam" id="TIGR01464">
    <property type="entry name" value="hemE"/>
    <property type="match status" value="1"/>
</dbReference>
<dbReference type="PANTHER" id="PTHR21091">
    <property type="entry name" value="METHYLTETRAHYDROFOLATE:HOMOCYSTEINE METHYLTRANSFERASE RELATED"/>
    <property type="match status" value="1"/>
</dbReference>
<dbReference type="PANTHER" id="PTHR21091:SF169">
    <property type="entry name" value="UROPORPHYRINOGEN DECARBOXYLASE"/>
    <property type="match status" value="1"/>
</dbReference>
<dbReference type="Pfam" id="PF01208">
    <property type="entry name" value="URO-D"/>
    <property type="match status" value="1"/>
</dbReference>
<dbReference type="SUPFAM" id="SSF51726">
    <property type="entry name" value="UROD/MetE-like"/>
    <property type="match status" value="1"/>
</dbReference>
<dbReference type="PROSITE" id="PS00906">
    <property type="entry name" value="UROD_1"/>
    <property type="match status" value="1"/>
</dbReference>
<dbReference type="PROSITE" id="PS00907">
    <property type="entry name" value="UROD_2"/>
    <property type="match status" value="1"/>
</dbReference>
<protein>
    <recommendedName>
        <fullName evidence="1">Uroporphyrinogen decarboxylase</fullName>
        <shortName evidence="1">UPD</shortName>
        <shortName evidence="1">URO-D</shortName>
        <ecNumber evidence="1">4.1.1.37</ecNumber>
    </recommendedName>
</protein>
<comment type="function">
    <text evidence="1">Catalyzes the decarboxylation of four acetate groups of uroporphyrinogen-III to yield coproporphyrinogen-III.</text>
</comment>
<comment type="catalytic activity">
    <reaction evidence="1">
        <text>uroporphyrinogen III + 4 H(+) = coproporphyrinogen III + 4 CO2</text>
        <dbReference type="Rhea" id="RHEA:19865"/>
        <dbReference type="ChEBI" id="CHEBI:15378"/>
        <dbReference type="ChEBI" id="CHEBI:16526"/>
        <dbReference type="ChEBI" id="CHEBI:57308"/>
        <dbReference type="ChEBI" id="CHEBI:57309"/>
        <dbReference type="EC" id="4.1.1.37"/>
    </reaction>
</comment>
<comment type="pathway">
    <text evidence="1">Porphyrin-containing compound metabolism; protoporphyrin-IX biosynthesis; coproporphyrinogen-III from 5-aminolevulinate: step 4/4.</text>
</comment>
<comment type="subunit">
    <text evidence="1">Homodimer.</text>
</comment>
<comment type="subcellular location">
    <subcellularLocation>
        <location evidence="1">Cytoplasm</location>
    </subcellularLocation>
</comment>
<comment type="similarity">
    <text evidence="1">Belongs to the uroporphyrinogen decarboxylase family.</text>
</comment>
<gene>
    <name evidence="1" type="primary">hemE</name>
    <name type="ordered locus">SARI_03490</name>
</gene>
<reference key="1">
    <citation type="submission" date="2007-11" db="EMBL/GenBank/DDBJ databases">
        <authorList>
            <consortium name="The Salmonella enterica serovar Arizonae Genome Sequencing Project"/>
            <person name="McClelland M."/>
            <person name="Sanderson E.K."/>
            <person name="Porwollik S."/>
            <person name="Spieth J."/>
            <person name="Clifton W.S."/>
            <person name="Fulton R."/>
            <person name="Chunyan W."/>
            <person name="Wollam A."/>
            <person name="Shah N."/>
            <person name="Pepin K."/>
            <person name="Bhonagiri V."/>
            <person name="Nash W."/>
            <person name="Johnson M."/>
            <person name="Thiruvilangam P."/>
            <person name="Wilson R."/>
        </authorList>
    </citation>
    <scope>NUCLEOTIDE SEQUENCE [LARGE SCALE GENOMIC DNA]</scope>
    <source>
        <strain>ATCC BAA-731 / CDC346-86 / RSK2980</strain>
    </source>
</reference>
<feature type="chain" id="PRO_1000078084" description="Uroporphyrinogen decarboxylase">
    <location>
        <begin position="1"/>
        <end position="354"/>
    </location>
</feature>
<feature type="binding site" evidence="1">
    <location>
        <begin position="27"/>
        <end position="31"/>
    </location>
    <ligand>
        <name>substrate</name>
    </ligand>
</feature>
<feature type="binding site" evidence="1">
    <location>
        <position position="77"/>
    </location>
    <ligand>
        <name>substrate</name>
    </ligand>
</feature>
<feature type="binding site" evidence="1">
    <location>
        <position position="154"/>
    </location>
    <ligand>
        <name>substrate</name>
    </ligand>
</feature>
<feature type="binding site" evidence="1">
    <location>
        <position position="209"/>
    </location>
    <ligand>
        <name>substrate</name>
    </ligand>
</feature>
<feature type="binding site" evidence="1">
    <location>
        <position position="327"/>
    </location>
    <ligand>
        <name>substrate</name>
    </ligand>
</feature>
<feature type="site" description="Transition state stabilizer" evidence="1">
    <location>
        <position position="77"/>
    </location>
</feature>